<reference key="1">
    <citation type="journal article" date="2002" name="Proc. Natl. Acad. Sci. U.S.A.">
        <title>Complete genome sequence and comparative genomic analysis of an emerging human pathogen, serotype V Streptococcus agalactiae.</title>
        <authorList>
            <person name="Tettelin H."/>
            <person name="Masignani V."/>
            <person name="Cieslewicz M.J."/>
            <person name="Eisen J.A."/>
            <person name="Peterson S.N."/>
            <person name="Wessels M.R."/>
            <person name="Paulsen I.T."/>
            <person name="Nelson K.E."/>
            <person name="Margarit I."/>
            <person name="Read T.D."/>
            <person name="Madoff L.C."/>
            <person name="Wolf A.M."/>
            <person name="Beanan M.J."/>
            <person name="Brinkac L.M."/>
            <person name="Daugherty S.C."/>
            <person name="DeBoy R.T."/>
            <person name="Durkin A.S."/>
            <person name="Kolonay J.F."/>
            <person name="Madupu R."/>
            <person name="Lewis M.R."/>
            <person name="Radune D."/>
            <person name="Fedorova N.B."/>
            <person name="Scanlan D."/>
            <person name="Khouri H.M."/>
            <person name="Mulligan S."/>
            <person name="Carty H.A."/>
            <person name="Cline R.T."/>
            <person name="Van Aken S.E."/>
            <person name="Gill J."/>
            <person name="Scarselli M."/>
            <person name="Mora M."/>
            <person name="Iacobini E.T."/>
            <person name="Brettoni C."/>
            <person name="Galli G."/>
            <person name="Mariani M."/>
            <person name="Vegni F."/>
            <person name="Maione D."/>
            <person name="Rinaudo D."/>
            <person name="Rappuoli R."/>
            <person name="Telford J.L."/>
            <person name="Kasper D.L."/>
            <person name="Grandi G."/>
            <person name="Fraser C.M."/>
        </authorList>
    </citation>
    <scope>NUCLEOTIDE SEQUENCE [LARGE SCALE GENOMIC DNA]</scope>
    <source>
        <strain>ATCC BAA-611 / 2603 V/R</strain>
    </source>
</reference>
<organism>
    <name type="scientific">Streptococcus agalactiae serotype V (strain ATCC BAA-611 / 2603 V/R)</name>
    <dbReference type="NCBI Taxonomy" id="208435"/>
    <lineage>
        <taxon>Bacteria</taxon>
        <taxon>Bacillati</taxon>
        <taxon>Bacillota</taxon>
        <taxon>Bacilli</taxon>
        <taxon>Lactobacillales</taxon>
        <taxon>Streptococcaceae</taxon>
        <taxon>Streptococcus</taxon>
    </lineage>
</organism>
<feature type="chain" id="PRO_0000339761" description="Xanthine phosphoribosyltransferase">
    <location>
        <begin position="1"/>
        <end position="193"/>
    </location>
</feature>
<feature type="binding site" evidence="1">
    <location>
        <position position="20"/>
    </location>
    <ligand>
        <name>xanthine</name>
        <dbReference type="ChEBI" id="CHEBI:17712"/>
    </ligand>
</feature>
<feature type="binding site" evidence="1">
    <location>
        <position position="27"/>
    </location>
    <ligand>
        <name>xanthine</name>
        <dbReference type="ChEBI" id="CHEBI:17712"/>
    </ligand>
</feature>
<feature type="binding site" evidence="1">
    <location>
        <begin position="128"/>
        <end position="132"/>
    </location>
    <ligand>
        <name>5-phospho-alpha-D-ribose 1-diphosphate</name>
        <dbReference type="ChEBI" id="CHEBI:58017"/>
    </ligand>
</feature>
<feature type="binding site" evidence="1">
    <location>
        <position position="156"/>
    </location>
    <ligand>
        <name>xanthine</name>
        <dbReference type="ChEBI" id="CHEBI:17712"/>
    </ligand>
</feature>
<accession>Q8DZL5</accession>
<gene>
    <name evidence="1" type="primary">xpt</name>
    <name type="ordered locus">SAG1086</name>
</gene>
<dbReference type="EC" id="2.4.2.22" evidence="1"/>
<dbReference type="EMBL" id="AE009948">
    <property type="protein sequence ID" value="AAM99967.1"/>
    <property type="molecule type" value="Genomic_DNA"/>
</dbReference>
<dbReference type="RefSeq" id="NP_688095.1">
    <property type="nucleotide sequence ID" value="NC_004116.1"/>
</dbReference>
<dbReference type="RefSeq" id="WP_000770389.1">
    <property type="nucleotide sequence ID" value="NC_004116.1"/>
</dbReference>
<dbReference type="SMR" id="Q8DZL5"/>
<dbReference type="STRING" id="208435.SAG1086"/>
<dbReference type="KEGG" id="sag:SAG1086"/>
<dbReference type="PATRIC" id="fig|208435.3.peg.1094"/>
<dbReference type="HOGENOM" id="CLU_099015_0_0_9"/>
<dbReference type="OrthoDB" id="9790678at2"/>
<dbReference type="UniPathway" id="UPA00602">
    <property type="reaction ID" value="UER00658"/>
</dbReference>
<dbReference type="Proteomes" id="UP000000821">
    <property type="component" value="Chromosome"/>
</dbReference>
<dbReference type="GO" id="GO:0005737">
    <property type="term" value="C:cytoplasm"/>
    <property type="evidence" value="ECO:0007669"/>
    <property type="project" value="UniProtKB-SubCell"/>
</dbReference>
<dbReference type="GO" id="GO:0000310">
    <property type="term" value="F:xanthine phosphoribosyltransferase activity"/>
    <property type="evidence" value="ECO:0007669"/>
    <property type="project" value="UniProtKB-UniRule"/>
</dbReference>
<dbReference type="GO" id="GO:0006166">
    <property type="term" value="P:purine ribonucleoside salvage"/>
    <property type="evidence" value="ECO:0007669"/>
    <property type="project" value="UniProtKB-KW"/>
</dbReference>
<dbReference type="GO" id="GO:0046110">
    <property type="term" value="P:xanthine metabolic process"/>
    <property type="evidence" value="ECO:0007669"/>
    <property type="project" value="InterPro"/>
</dbReference>
<dbReference type="GO" id="GO:0032265">
    <property type="term" value="P:XMP salvage"/>
    <property type="evidence" value="ECO:0007669"/>
    <property type="project" value="UniProtKB-UniRule"/>
</dbReference>
<dbReference type="CDD" id="cd06223">
    <property type="entry name" value="PRTases_typeI"/>
    <property type="match status" value="1"/>
</dbReference>
<dbReference type="Gene3D" id="3.40.50.2020">
    <property type="match status" value="1"/>
</dbReference>
<dbReference type="HAMAP" id="MF_01184">
    <property type="entry name" value="XPRTase"/>
    <property type="match status" value="1"/>
</dbReference>
<dbReference type="InterPro" id="IPR000836">
    <property type="entry name" value="PRibTrfase_dom"/>
</dbReference>
<dbReference type="InterPro" id="IPR029057">
    <property type="entry name" value="PRTase-like"/>
</dbReference>
<dbReference type="InterPro" id="IPR050118">
    <property type="entry name" value="Pur/Pyrimidine_PRTase"/>
</dbReference>
<dbReference type="InterPro" id="IPR010079">
    <property type="entry name" value="Xanthine_PRibTrfase"/>
</dbReference>
<dbReference type="NCBIfam" id="NF006671">
    <property type="entry name" value="PRK09219.1"/>
    <property type="match status" value="1"/>
</dbReference>
<dbReference type="NCBIfam" id="TIGR01744">
    <property type="entry name" value="XPRTase"/>
    <property type="match status" value="1"/>
</dbReference>
<dbReference type="PANTHER" id="PTHR43864">
    <property type="entry name" value="HYPOXANTHINE/GUANINE PHOSPHORIBOSYLTRANSFERASE"/>
    <property type="match status" value="1"/>
</dbReference>
<dbReference type="PANTHER" id="PTHR43864:SF1">
    <property type="entry name" value="XANTHINE PHOSPHORIBOSYLTRANSFERASE"/>
    <property type="match status" value="1"/>
</dbReference>
<dbReference type="Pfam" id="PF00156">
    <property type="entry name" value="Pribosyltran"/>
    <property type="match status" value="1"/>
</dbReference>
<dbReference type="SUPFAM" id="SSF53271">
    <property type="entry name" value="PRTase-like"/>
    <property type="match status" value="1"/>
</dbReference>
<protein>
    <recommendedName>
        <fullName evidence="1">Xanthine phosphoribosyltransferase</fullName>
        <shortName evidence="1">XPRTase</shortName>
        <ecNumber evidence="1">2.4.2.22</ecNumber>
    </recommendedName>
</protein>
<keyword id="KW-0963">Cytoplasm</keyword>
<keyword id="KW-0328">Glycosyltransferase</keyword>
<keyword id="KW-0660">Purine salvage</keyword>
<keyword id="KW-1185">Reference proteome</keyword>
<keyword id="KW-0808">Transferase</keyword>
<name>XPT_STRA5</name>
<proteinExistence type="inferred from homology"/>
<evidence type="ECO:0000255" key="1">
    <source>
        <dbReference type="HAMAP-Rule" id="MF_01184"/>
    </source>
</evidence>
<sequence>MKLLEERILKDGDVLGENILKVDSFLTHQVDFELMQEIGKVFADKYKEAGITKVVTIEASGIAPAVYAAQALGVPMIFAKKAKNITMTEGILTAEVYSFTKQVTSQVSIVSRFLSNDDTVLIIDDFLANGQAAKGLLEIIGQAGAKVAGIGIVIEKSFQDGRDLLEKTGVPVTSLARIKAFENGRVVFAEADA</sequence>
<comment type="function">
    <text evidence="1">Converts the preformed base xanthine, a product of nucleic acid breakdown, to xanthosine 5'-monophosphate (XMP), so it can be reused for RNA or DNA synthesis.</text>
</comment>
<comment type="catalytic activity">
    <reaction evidence="1">
        <text>XMP + diphosphate = xanthine + 5-phospho-alpha-D-ribose 1-diphosphate</text>
        <dbReference type="Rhea" id="RHEA:10800"/>
        <dbReference type="ChEBI" id="CHEBI:17712"/>
        <dbReference type="ChEBI" id="CHEBI:33019"/>
        <dbReference type="ChEBI" id="CHEBI:57464"/>
        <dbReference type="ChEBI" id="CHEBI:58017"/>
        <dbReference type="EC" id="2.4.2.22"/>
    </reaction>
</comment>
<comment type="pathway">
    <text evidence="1">Purine metabolism; XMP biosynthesis via salvage pathway; XMP from xanthine: step 1/1.</text>
</comment>
<comment type="subunit">
    <text evidence="1">Homodimer.</text>
</comment>
<comment type="subcellular location">
    <subcellularLocation>
        <location evidence="1">Cytoplasm</location>
    </subcellularLocation>
</comment>
<comment type="similarity">
    <text evidence="1">Belongs to the purine/pyrimidine phosphoribosyltransferase family. Xpt subfamily.</text>
</comment>